<dbReference type="EMBL" id="EU626218">
    <property type="protein sequence ID" value="ACC93613.1"/>
    <property type="molecule type" value="mRNA"/>
</dbReference>
<dbReference type="RefSeq" id="NP_001120747.1">
    <property type="nucleotide sequence ID" value="NM_001127275.1"/>
</dbReference>
<dbReference type="SMR" id="B2MVX9"/>
<dbReference type="STRING" id="9940.ENSOARP00000002484"/>
<dbReference type="PaxDb" id="9940-ENSOARP00000002484"/>
<dbReference type="GeneID" id="100147784"/>
<dbReference type="KEGG" id="oas:100147784"/>
<dbReference type="CTD" id="54977"/>
<dbReference type="eggNOG" id="KOG0766">
    <property type="taxonomic scope" value="Eukaryota"/>
</dbReference>
<dbReference type="OrthoDB" id="1924968at2759"/>
<dbReference type="Proteomes" id="UP000002356">
    <property type="component" value="Unplaced"/>
</dbReference>
<dbReference type="GO" id="GO:0005743">
    <property type="term" value="C:mitochondrial inner membrane"/>
    <property type="evidence" value="ECO:0000250"/>
    <property type="project" value="UniProtKB"/>
</dbReference>
<dbReference type="GO" id="GO:0015187">
    <property type="term" value="F:glycine transmembrane transporter activity"/>
    <property type="evidence" value="ECO:0007669"/>
    <property type="project" value="UniProtKB-UniRule"/>
</dbReference>
<dbReference type="GO" id="GO:0030218">
    <property type="term" value="P:erythrocyte differentiation"/>
    <property type="evidence" value="ECO:0000250"/>
    <property type="project" value="UniProtKB"/>
</dbReference>
<dbReference type="GO" id="GO:1904983">
    <property type="term" value="P:glycine import into mitochondrion"/>
    <property type="evidence" value="ECO:0007669"/>
    <property type="project" value="UniProtKB-UniRule"/>
</dbReference>
<dbReference type="FunFam" id="1.50.40.10:FF:000036">
    <property type="entry name" value="Mitochondrial glycine transporter B"/>
    <property type="match status" value="1"/>
</dbReference>
<dbReference type="Gene3D" id="1.50.40.10">
    <property type="entry name" value="Mitochondrial carrier domain"/>
    <property type="match status" value="1"/>
</dbReference>
<dbReference type="HAMAP" id="MF_03064">
    <property type="entry name" value="SLC25A38"/>
    <property type="match status" value="1"/>
</dbReference>
<dbReference type="InterPro" id="IPR030847">
    <property type="entry name" value="Hem25/SLC25A38"/>
</dbReference>
<dbReference type="InterPro" id="IPR018108">
    <property type="entry name" value="Mitochondrial_sb/sol_carrier"/>
</dbReference>
<dbReference type="InterPro" id="IPR023395">
    <property type="entry name" value="Mt_carrier_dom_sf"/>
</dbReference>
<dbReference type="PANTHER" id="PTHR46181">
    <property type="entry name" value="MITOCHONDRIAL GLYCINE TRANSPORTER"/>
    <property type="match status" value="1"/>
</dbReference>
<dbReference type="PANTHER" id="PTHR46181:SF3">
    <property type="entry name" value="MITOCHONDRIAL GLYCINE TRANSPORTER"/>
    <property type="match status" value="1"/>
</dbReference>
<dbReference type="Pfam" id="PF00153">
    <property type="entry name" value="Mito_carr"/>
    <property type="match status" value="3"/>
</dbReference>
<dbReference type="SUPFAM" id="SSF103506">
    <property type="entry name" value="Mitochondrial carrier"/>
    <property type="match status" value="1"/>
</dbReference>
<dbReference type="PROSITE" id="PS50920">
    <property type="entry name" value="SOLCAR"/>
    <property type="match status" value="3"/>
</dbReference>
<organism>
    <name type="scientific">Ovis aries</name>
    <name type="common">Sheep</name>
    <dbReference type="NCBI Taxonomy" id="9940"/>
    <lineage>
        <taxon>Eukaryota</taxon>
        <taxon>Metazoa</taxon>
        <taxon>Chordata</taxon>
        <taxon>Craniata</taxon>
        <taxon>Vertebrata</taxon>
        <taxon>Euteleostomi</taxon>
        <taxon>Mammalia</taxon>
        <taxon>Eutheria</taxon>
        <taxon>Laurasiatheria</taxon>
        <taxon>Artiodactyla</taxon>
        <taxon>Ruminantia</taxon>
        <taxon>Pecora</taxon>
        <taxon>Bovidae</taxon>
        <taxon>Caprinae</taxon>
        <taxon>Ovis</taxon>
    </lineage>
</organism>
<name>S2538_SHEEP</name>
<evidence type="ECO:0000250" key="1">
    <source>
        <dbReference type="UniProtKB" id="Q91XD8"/>
    </source>
</evidence>
<evidence type="ECO:0000250" key="2">
    <source>
        <dbReference type="UniProtKB" id="Q96DW6"/>
    </source>
</evidence>
<evidence type="ECO:0000255" key="3">
    <source>
        <dbReference type="HAMAP-Rule" id="MF_03064"/>
    </source>
</evidence>
<proteinExistence type="evidence at transcript level"/>
<sequence length="306" mass="33593">MIQKSRPALLQHQDVGDRVETLMLQPVIKAFLCGSISGTCSTVLFQPLDLLKTRLQTLQPSAHGSRRVGMLALLLTVVRTESLLGLWKGMSPSIVRCVPGVGIYFGTLYSLKQYFLRGHPPTALESVILGAGSRSVAGVCMSPITVIKTRYESGRYGYQSIYAALRSICHSEGFRGLFSGLTATLLRDAPFSGIYLMFYSQTKNVVLHSTDQLDAVLVPVVNFSCGIFAGILASLVTQPADVIKTHMQLSPVKFRWIGQSVTLIFKDYGLRGFFQGSVPRALRRTLVAAMAWTVYEEMMAKMGLKS</sequence>
<protein>
    <recommendedName>
        <fullName evidence="3">Mitochondrial glycine transporter</fullName>
    </recommendedName>
    <alternativeName>
        <fullName evidence="3">Solute carrier family 25 member 38</fullName>
    </alternativeName>
</protein>
<keyword id="KW-0472">Membrane</keyword>
<keyword id="KW-0496">Mitochondrion</keyword>
<keyword id="KW-0999">Mitochondrion inner membrane</keyword>
<keyword id="KW-1185">Reference proteome</keyword>
<keyword id="KW-0677">Repeat</keyword>
<keyword id="KW-0812">Transmembrane</keyword>
<keyword id="KW-1133">Transmembrane helix</keyword>
<keyword id="KW-0813">Transport</keyword>
<accession>B2MVX9</accession>
<comment type="function">
    <text evidence="3">Mitochondrial glycine transporter that imports glycine into the mitochondrial matrix. Plays an important role in providing glycine for the first enzymatic step in heme biosynthesis, the condensation of glycine with succinyl-CoA to produce 5-aminolevulinate (ALA) in the mitochondrial matrix. Required during erythropoiesis.</text>
</comment>
<comment type="function">
    <text evidence="1">Plays a role as pro-apoptotic protein that induces caspase-dependent apoptosis.</text>
</comment>
<comment type="catalytic activity">
    <reaction evidence="2">
        <text>glycine(in) = glycine(out)</text>
        <dbReference type="Rhea" id="RHEA:70715"/>
        <dbReference type="ChEBI" id="CHEBI:57305"/>
    </reaction>
</comment>
<comment type="subcellular location">
    <subcellularLocation>
        <location evidence="3">Mitochondrion inner membrane</location>
        <topology evidence="3">Multi-pass membrane protein</topology>
    </subcellularLocation>
</comment>
<comment type="similarity">
    <text evidence="3">Belongs to the mitochondrial carrier (TC 2.A.29) family. SLC25A38 subfamily.</text>
</comment>
<feature type="chain" id="PRO_0000378920" description="Mitochondrial glycine transporter">
    <location>
        <begin position="1"/>
        <end position="306"/>
    </location>
</feature>
<feature type="transmembrane region" description="Helical; Name=1" evidence="3">
    <location>
        <begin position="31"/>
        <end position="56"/>
    </location>
</feature>
<feature type="transmembrane region" description="Helical; Name=2" evidence="3">
    <location>
        <begin position="89"/>
        <end position="115"/>
    </location>
</feature>
<feature type="transmembrane region" description="Helical; Name=3" evidence="3">
    <location>
        <begin position="127"/>
        <end position="152"/>
    </location>
</feature>
<feature type="transmembrane region" description="Helical; Name=4" evidence="3">
    <location>
        <begin position="180"/>
        <end position="203"/>
    </location>
</feature>
<feature type="transmembrane region" description="Helical; Name=5" evidence="3">
    <location>
        <begin position="221"/>
        <end position="247"/>
    </location>
</feature>
<feature type="transmembrane region" description="Helical; Name=6" evidence="3">
    <location>
        <begin position="276"/>
        <end position="294"/>
    </location>
</feature>
<feature type="repeat" description="Solcar 1" evidence="3">
    <location>
        <begin position="25"/>
        <end position="114"/>
    </location>
</feature>
<feature type="repeat" description="Solcar 2" evidence="3">
    <location>
        <begin position="121"/>
        <end position="205"/>
    </location>
</feature>
<feature type="repeat" description="Solcar 3" evidence="3">
    <location>
        <begin position="217"/>
        <end position="301"/>
    </location>
</feature>
<gene>
    <name evidence="3" type="primary">SLC25A38</name>
</gene>
<reference key="1">
    <citation type="submission" date="2008-04" db="EMBL/GenBank/DDBJ databases">
        <title>Molecular clone and sequence analysis of SLC25A38 from black-boned sheep (Ovis aries).</title>
        <authorList>
            <person name="Deng W."/>
        </authorList>
    </citation>
    <scope>NUCLEOTIDE SEQUENCE [MRNA]</scope>
</reference>